<evidence type="ECO:0000250" key="1"/>
<evidence type="ECO:0000255" key="2">
    <source>
        <dbReference type="HAMAP-Rule" id="MF_00100"/>
    </source>
</evidence>
<keyword id="KW-0963">Cytoplasm</keyword>
<keyword id="KW-0342">GTP-binding</keyword>
<keyword id="KW-0396">Initiation factor</keyword>
<keyword id="KW-0547">Nucleotide-binding</keyword>
<keyword id="KW-0648">Protein biosynthesis</keyword>
<gene>
    <name evidence="2" type="primary">infB</name>
    <name type="ordered locus">CLH_1224</name>
</gene>
<organism>
    <name type="scientific">Clostridium botulinum (strain Alaska E43 / Type E3)</name>
    <dbReference type="NCBI Taxonomy" id="508767"/>
    <lineage>
        <taxon>Bacteria</taxon>
        <taxon>Bacillati</taxon>
        <taxon>Bacillota</taxon>
        <taxon>Clostridia</taxon>
        <taxon>Eubacteriales</taxon>
        <taxon>Clostridiaceae</taxon>
        <taxon>Clostridium</taxon>
    </lineage>
</organism>
<dbReference type="EMBL" id="CP001078">
    <property type="protein sequence ID" value="ACD52052.1"/>
    <property type="molecule type" value="Genomic_DNA"/>
</dbReference>
<dbReference type="RefSeq" id="WP_003370394.1">
    <property type="nucleotide sequence ID" value="NC_010723.1"/>
</dbReference>
<dbReference type="SMR" id="B2V4G9"/>
<dbReference type="KEGG" id="cbt:CLH_1224"/>
<dbReference type="HOGENOM" id="CLU_006301_5_1_9"/>
<dbReference type="GO" id="GO:0005829">
    <property type="term" value="C:cytosol"/>
    <property type="evidence" value="ECO:0007669"/>
    <property type="project" value="TreeGrafter"/>
</dbReference>
<dbReference type="GO" id="GO:0005525">
    <property type="term" value="F:GTP binding"/>
    <property type="evidence" value="ECO:0007669"/>
    <property type="project" value="UniProtKB-KW"/>
</dbReference>
<dbReference type="GO" id="GO:0003924">
    <property type="term" value="F:GTPase activity"/>
    <property type="evidence" value="ECO:0007669"/>
    <property type="project" value="UniProtKB-UniRule"/>
</dbReference>
<dbReference type="GO" id="GO:0003743">
    <property type="term" value="F:translation initiation factor activity"/>
    <property type="evidence" value="ECO:0007669"/>
    <property type="project" value="UniProtKB-UniRule"/>
</dbReference>
<dbReference type="CDD" id="cd01887">
    <property type="entry name" value="IF2_eIF5B"/>
    <property type="match status" value="1"/>
</dbReference>
<dbReference type="CDD" id="cd03702">
    <property type="entry name" value="IF2_mtIF2_II"/>
    <property type="match status" value="1"/>
</dbReference>
<dbReference type="CDD" id="cd03692">
    <property type="entry name" value="mtIF2_IVc"/>
    <property type="match status" value="1"/>
</dbReference>
<dbReference type="FunFam" id="2.40.30.10:FF:000007">
    <property type="entry name" value="Translation initiation factor IF-2"/>
    <property type="match status" value="1"/>
</dbReference>
<dbReference type="FunFam" id="2.40.30.10:FF:000008">
    <property type="entry name" value="Translation initiation factor IF-2"/>
    <property type="match status" value="1"/>
</dbReference>
<dbReference type="FunFam" id="3.40.50.10050:FF:000001">
    <property type="entry name" value="Translation initiation factor IF-2"/>
    <property type="match status" value="1"/>
</dbReference>
<dbReference type="FunFam" id="3.40.50.300:FF:000019">
    <property type="entry name" value="Translation initiation factor IF-2"/>
    <property type="match status" value="1"/>
</dbReference>
<dbReference type="Gene3D" id="1.10.10.2480">
    <property type="match status" value="1"/>
</dbReference>
<dbReference type="Gene3D" id="3.40.50.300">
    <property type="entry name" value="P-loop containing nucleotide triphosphate hydrolases"/>
    <property type="match status" value="1"/>
</dbReference>
<dbReference type="Gene3D" id="2.40.30.10">
    <property type="entry name" value="Translation factors"/>
    <property type="match status" value="2"/>
</dbReference>
<dbReference type="Gene3D" id="3.40.50.10050">
    <property type="entry name" value="Translation initiation factor IF- 2, domain 3"/>
    <property type="match status" value="1"/>
</dbReference>
<dbReference type="HAMAP" id="MF_00100_B">
    <property type="entry name" value="IF_2_B"/>
    <property type="match status" value="1"/>
</dbReference>
<dbReference type="InterPro" id="IPR053905">
    <property type="entry name" value="EF-G-like_DII"/>
</dbReference>
<dbReference type="InterPro" id="IPR044145">
    <property type="entry name" value="IF2_II"/>
</dbReference>
<dbReference type="InterPro" id="IPR006847">
    <property type="entry name" value="IF2_N"/>
</dbReference>
<dbReference type="InterPro" id="IPR027417">
    <property type="entry name" value="P-loop_NTPase"/>
</dbReference>
<dbReference type="InterPro" id="IPR005225">
    <property type="entry name" value="Small_GTP-bd"/>
</dbReference>
<dbReference type="InterPro" id="IPR000795">
    <property type="entry name" value="T_Tr_GTP-bd_dom"/>
</dbReference>
<dbReference type="InterPro" id="IPR000178">
    <property type="entry name" value="TF_IF2_bacterial-like"/>
</dbReference>
<dbReference type="InterPro" id="IPR015760">
    <property type="entry name" value="TIF_IF2"/>
</dbReference>
<dbReference type="InterPro" id="IPR023115">
    <property type="entry name" value="TIF_IF2_dom3"/>
</dbReference>
<dbReference type="InterPro" id="IPR036925">
    <property type="entry name" value="TIF_IF2_dom3_sf"/>
</dbReference>
<dbReference type="InterPro" id="IPR009000">
    <property type="entry name" value="Transl_B-barrel_sf"/>
</dbReference>
<dbReference type="NCBIfam" id="TIGR00487">
    <property type="entry name" value="IF-2"/>
    <property type="match status" value="1"/>
</dbReference>
<dbReference type="NCBIfam" id="TIGR00231">
    <property type="entry name" value="small_GTP"/>
    <property type="match status" value="1"/>
</dbReference>
<dbReference type="PANTHER" id="PTHR43381:SF5">
    <property type="entry name" value="TR-TYPE G DOMAIN-CONTAINING PROTEIN"/>
    <property type="match status" value="1"/>
</dbReference>
<dbReference type="PANTHER" id="PTHR43381">
    <property type="entry name" value="TRANSLATION INITIATION FACTOR IF-2-RELATED"/>
    <property type="match status" value="1"/>
</dbReference>
<dbReference type="Pfam" id="PF22042">
    <property type="entry name" value="EF-G_D2"/>
    <property type="match status" value="1"/>
</dbReference>
<dbReference type="Pfam" id="PF00009">
    <property type="entry name" value="GTP_EFTU"/>
    <property type="match status" value="1"/>
</dbReference>
<dbReference type="Pfam" id="PF11987">
    <property type="entry name" value="IF-2"/>
    <property type="match status" value="1"/>
</dbReference>
<dbReference type="Pfam" id="PF04760">
    <property type="entry name" value="IF2_N"/>
    <property type="match status" value="2"/>
</dbReference>
<dbReference type="SUPFAM" id="SSF52156">
    <property type="entry name" value="Initiation factor IF2/eIF5b, domain 3"/>
    <property type="match status" value="1"/>
</dbReference>
<dbReference type="SUPFAM" id="SSF52540">
    <property type="entry name" value="P-loop containing nucleoside triphosphate hydrolases"/>
    <property type="match status" value="1"/>
</dbReference>
<dbReference type="SUPFAM" id="SSF50447">
    <property type="entry name" value="Translation proteins"/>
    <property type="match status" value="2"/>
</dbReference>
<dbReference type="PROSITE" id="PS51722">
    <property type="entry name" value="G_TR_2"/>
    <property type="match status" value="1"/>
</dbReference>
<dbReference type="PROSITE" id="PS01176">
    <property type="entry name" value="IF2"/>
    <property type="match status" value="1"/>
</dbReference>
<name>IF2_CLOBA</name>
<accession>B2V4G9</accession>
<proteinExistence type="inferred from homology"/>
<feature type="chain" id="PRO_1000093773" description="Translation initiation factor IF-2">
    <location>
        <begin position="1"/>
        <end position="687"/>
    </location>
</feature>
<feature type="domain" description="tr-type G">
    <location>
        <begin position="186"/>
        <end position="355"/>
    </location>
</feature>
<feature type="region of interest" description="G1" evidence="1">
    <location>
        <begin position="195"/>
        <end position="202"/>
    </location>
</feature>
<feature type="region of interest" description="G2" evidence="1">
    <location>
        <begin position="220"/>
        <end position="224"/>
    </location>
</feature>
<feature type="region of interest" description="G3" evidence="1">
    <location>
        <begin position="241"/>
        <end position="244"/>
    </location>
</feature>
<feature type="region of interest" description="G4" evidence="1">
    <location>
        <begin position="295"/>
        <end position="298"/>
    </location>
</feature>
<feature type="region of interest" description="G5" evidence="1">
    <location>
        <begin position="331"/>
        <end position="333"/>
    </location>
</feature>
<feature type="binding site" evidence="2">
    <location>
        <begin position="195"/>
        <end position="202"/>
    </location>
    <ligand>
        <name>GTP</name>
        <dbReference type="ChEBI" id="CHEBI:37565"/>
    </ligand>
</feature>
<feature type="binding site" evidence="2">
    <location>
        <begin position="241"/>
        <end position="245"/>
    </location>
    <ligand>
        <name>GTP</name>
        <dbReference type="ChEBI" id="CHEBI:37565"/>
    </ligand>
</feature>
<feature type="binding site" evidence="2">
    <location>
        <begin position="295"/>
        <end position="298"/>
    </location>
    <ligand>
        <name>GTP</name>
        <dbReference type="ChEBI" id="CHEBI:37565"/>
    </ligand>
</feature>
<sequence>MSKIRVYELAKELNVSSKDLITLLMDEFGVEVKNHMSAIEDEEAQLIKELLATKPEYVEGSLEDSKSLVDEYEEILQNELNKAKKKRKKNKREDKDDENEELETEVIEIGETITVKELAEKLNKPSNDVIRTLIFSGVMAAINQEIDFATAEKVCESYGVILEKLEVIEELEAVEVEEDDEENLEKRPPIVTVMGHVDHGKTSLLDAIRKAKVTDTEAGGITQHIGAYTININGEEITFLDTPGHEAFTAMRARGAQVTDVVILVVAADDGIMPQTKEAINHCKAAGVPMVVAINKIDKPGANPDRVKQELTEHGLVVEEWGGDTICEEVSAKSNLNIEKLLEMVLLTAEMLELKANKERKAKGTVIEAKLDKGRGPVATLLVQNGTLHVGDAIIVGSTYGRIRAMFDDTGKKIKSAGPSIPVEVLGLSEVPEAGDRFNQVKDEKTARIMADKRKDKEKSDSLMSGNRVSLEDLYSQIKEGKVKELGIIVKADVQGSVQAINQSLEKLSTDDVKVRVIHGGVGAITETDITLATASNAIVIGFNVRPDNNAVAQADKENVEIKTYRIIYDAIEDVKSAMIGMLEPEYKEVILGSAEVRETYKISNVGTIAGCYVLNGKLQRNAETRVIRDGIVIFESSLSSLKRFKDDVKEVNTGYECGLTVEKFNDVKEGDILECFMMEAIKRKEL</sequence>
<protein>
    <recommendedName>
        <fullName evidence="2">Translation initiation factor IF-2</fullName>
    </recommendedName>
</protein>
<reference key="1">
    <citation type="submission" date="2008-05" db="EMBL/GenBank/DDBJ databases">
        <title>Complete genome sequence of Clostridium botulinum E3 str. Alaska E43.</title>
        <authorList>
            <person name="Brinkac L.M."/>
            <person name="Brown J.L."/>
            <person name="Bruce D."/>
            <person name="Detter C."/>
            <person name="Munk C."/>
            <person name="Smith L.A."/>
            <person name="Smith T.J."/>
            <person name="Sutton G."/>
            <person name="Brettin T.S."/>
        </authorList>
    </citation>
    <scope>NUCLEOTIDE SEQUENCE [LARGE SCALE GENOMIC DNA]</scope>
    <source>
        <strain>Alaska E43 / Type E3</strain>
    </source>
</reference>
<comment type="function">
    <text evidence="2">One of the essential components for the initiation of protein synthesis. Protects formylmethionyl-tRNA from spontaneous hydrolysis and promotes its binding to the 30S ribosomal subunits. Also involved in the hydrolysis of GTP during the formation of the 70S ribosomal complex.</text>
</comment>
<comment type="subcellular location">
    <subcellularLocation>
        <location evidence="2">Cytoplasm</location>
    </subcellularLocation>
</comment>
<comment type="similarity">
    <text evidence="2">Belongs to the TRAFAC class translation factor GTPase superfamily. Classic translation factor GTPase family. IF-2 subfamily.</text>
</comment>